<organism>
    <name type="scientific">Brachypodium distachyon</name>
    <name type="common">Purple false brome</name>
    <name type="synonym">Trachynia distachya</name>
    <dbReference type="NCBI Taxonomy" id="15368"/>
    <lineage>
        <taxon>Eukaryota</taxon>
        <taxon>Viridiplantae</taxon>
        <taxon>Streptophyta</taxon>
        <taxon>Embryophyta</taxon>
        <taxon>Tracheophyta</taxon>
        <taxon>Spermatophyta</taxon>
        <taxon>Magnoliopsida</taxon>
        <taxon>Liliopsida</taxon>
        <taxon>Poales</taxon>
        <taxon>Poaceae</taxon>
        <taxon>BOP clade</taxon>
        <taxon>Pooideae</taxon>
        <taxon>Stipodae</taxon>
        <taxon>Brachypodieae</taxon>
        <taxon>Brachypodium</taxon>
    </lineage>
</organism>
<comment type="function">
    <text evidence="1">Binds directly to 23S ribosomal RNA and is necessary for the in vitro assembly process of the 50S ribosomal subunit. It is not involved in the protein synthesizing functions of that subunit.</text>
</comment>
<comment type="subcellular location">
    <subcellularLocation>
        <location>Plastid</location>
        <location>Chloroplast</location>
    </subcellularLocation>
</comment>
<comment type="similarity">
    <text evidence="1">Belongs to the bacterial ribosomal protein bL20 family.</text>
</comment>
<accession>B3TN72</accession>
<reference key="1">
    <citation type="journal article" date="2008" name="BMC Res. Notes">
        <title>The complete chloroplast genome sequence of Brachypodium distachyon: sequence comparison and phylogenetic analysis of eight grass plastomes.</title>
        <authorList>
            <person name="Bortiri E."/>
            <person name="Coleman-Derr D."/>
            <person name="Lazo G.R."/>
            <person name="Anderson O.D."/>
            <person name="Gu Y.Q."/>
        </authorList>
    </citation>
    <scope>NUCLEOTIDE SEQUENCE [LARGE SCALE GENOMIC DNA]</scope>
    <source>
        <strain>cv. Bd21</strain>
    </source>
</reference>
<dbReference type="EMBL" id="EU325680">
    <property type="protein sequence ID" value="ACF08661.1"/>
    <property type="molecule type" value="Genomic_DNA"/>
</dbReference>
<dbReference type="RefSeq" id="YP_002000508.1">
    <property type="nucleotide sequence ID" value="NC_011032.1"/>
</dbReference>
<dbReference type="SMR" id="B3TN72"/>
<dbReference type="FunCoup" id="B3TN72">
    <property type="interactions" value="142"/>
</dbReference>
<dbReference type="STRING" id="15368.B3TN72"/>
<dbReference type="GeneID" id="6439776"/>
<dbReference type="KEGG" id="bdi:6439776"/>
<dbReference type="InParanoid" id="B3TN72"/>
<dbReference type="Proteomes" id="UP000008810">
    <property type="component" value="Chloroplast"/>
</dbReference>
<dbReference type="GO" id="GO:0009507">
    <property type="term" value="C:chloroplast"/>
    <property type="evidence" value="ECO:0007669"/>
    <property type="project" value="UniProtKB-SubCell"/>
</dbReference>
<dbReference type="GO" id="GO:1990904">
    <property type="term" value="C:ribonucleoprotein complex"/>
    <property type="evidence" value="ECO:0007669"/>
    <property type="project" value="UniProtKB-KW"/>
</dbReference>
<dbReference type="GO" id="GO:0005840">
    <property type="term" value="C:ribosome"/>
    <property type="evidence" value="ECO:0007669"/>
    <property type="project" value="UniProtKB-KW"/>
</dbReference>
<dbReference type="GO" id="GO:0019843">
    <property type="term" value="F:rRNA binding"/>
    <property type="evidence" value="ECO:0007669"/>
    <property type="project" value="UniProtKB-UniRule"/>
</dbReference>
<dbReference type="GO" id="GO:0003735">
    <property type="term" value="F:structural constituent of ribosome"/>
    <property type="evidence" value="ECO:0000318"/>
    <property type="project" value="GO_Central"/>
</dbReference>
<dbReference type="GO" id="GO:0000027">
    <property type="term" value="P:ribosomal large subunit assembly"/>
    <property type="evidence" value="ECO:0007669"/>
    <property type="project" value="UniProtKB-UniRule"/>
</dbReference>
<dbReference type="GO" id="GO:0006412">
    <property type="term" value="P:translation"/>
    <property type="evidence" value="ECO:0007669"/>
    <property type="project" value="InterPro"/>
</dbReference>
<dbReference type="CDD" id="cd07026">
    <property type="entry name" value="Ribosomal_L20"/>
    <property type="match status" value="1"/>
</dbReference>
<dbReference type="FunFam" id="1.10.1900.20:FF:000002">
    <property type="entry name" value="50S ribosomal protein L20, chloroplastic"/>
    <property type="match status" value="1"/>
</dbReference>
<dbReference type="Gene3D" id="6.10.160.10">
    <property type="match status" value="1"/>
</dbReference>
<dbReference type="Gene3D" id="1.10.1900.20">
    <property type="entry name" value="Ribosomal protein L20"/>
    <property type="match status" value="1"/>
</dbReference>
<dbReference type="HAMAP" id="MF_00382">
    <property type="entry name" value="Ribosomal_bL20"/>
    <property type="match status" value="1"/>
</dbReference>
<dbReference type="InterPro" id="IPR005813">
    <property type="entry name" value="Ribosomal_bL20"/>
</dbReference>
<dbReference type="InterPro" id="IPR049946">
    <property type="entry name" value="RIBOSOMAL_L20_CS"/>
</dbReference>
<dbReference type="InterPro" id="IPR035566">
    <property type="entry name" value="Ribosomal_protein_bL20_C"/>
</dbReference>
<dbReference type="NCBIfam" id="TIGR01032">
    <property type="entry name" value="rplT_bact"/>
    <property type="match status" value="1"/>
</dbReference>
<dbReference type="PANTHER" id="PTHR10986">
    <property type="entry name" value="39S RIBOSOMAL PROTEIN L20"/>
    <property type="match status" value="1"/>
</dbReference>
<dbReference type="Pfam" id="PF00453">
    <property type="entry name" value="Ribosomal_L20"/>
    <property type="match status" value="1"/>
</dbReference>
<dbReference type="PRINTS" id="PR00062">
    <property type="entry name" value="RIBOSOMALL20"/>
</dbReference>
<dbReference type="SUPFAM" id="SSF74731">
    <property type="entry name" value="Ribosomal protein L20"/>
    <property type="match status" value="1"/>
</dbReference>
<dbReference type="PROSITE" id="PS00937">
    <property type="entry name" value="RIBOSOMAL_L20"/>
    <property type="match status" value="1"/>
</dbReference>
<proteinExistence type="inferred from homology"/>
<name>RK20_BRADI</name>
<feature type="chain" id="PRO_0000355489" description="Large ribosomal subunit protein bL20c">
    <location>
        <begin position="1"/>
        <end position="119"/>
    </location>
</feature>
<geneLocation type="chloroplast"/>
<evidence type="ECO:0000255" key="1">
    <source>
        <dbReference type="HAMAP-Rule" id="MF_00382"/>
    </source>
</evidence>
<evidence type="ECO:0000305" key="2"/>
<gene>
    <name evidence="1" type="primary">rpl20</name>
</gene>
<keyword id="KW-0150">Chloroplast</keyword>
<keyword id="KW-0934">Plastid</keyword>
<keyword id="KW-1185">Reference proteome</keyword>
<keyword id="KW-0687">Ribonucleoprotein</keyword>
<keyword id="KW-0689">Ribosomal protein</keyword>
<keyword id="KW-0694">RNA-binding</keyword>
<keyword id="KW-0699">rRNA-binding</keyword>
<sequence length="119" mass="14318">MTRVPRGYIARRRRTKMRSFASNFRGAHLRLNRMITQQVKRAFVSSHRDRGRQKRDFRRLWITRINAATRIFKVFDSYSKLIHNLYKKKLILNRKMLAQVAVSNPNNLYTISKKIKIIN</sequence>
<protein>
    <recommendedName>
        <fullName evidence="1">Large ribosomal subunit protein bL20c</fullName>
    </recommendedName>
    <alternativeName>
        <fullName evidence="2">50S ribosomal protein L20, chloroplastic</fullName>
    </alternativeName>
</protein>